<comment type="function">
    <text evidence="2">GTP hydrolase that promotes the GTP-dependent binding of aminoacyl-tRNA to the A-site of ribosomes during protein biosynthesis.</text>
</comment>
<comment type="catalytic activity">
    <reaction evidence="2">
        <text>GTP + H2O = GDP + phosphate + H(+)</text>
        <dbReference type="Rhea" id="RHEA:19669"/>
        <dbReference type="ChEBI" id="CHEBI:15377"/>
        <dbReference type="ChEBI" id="CHEBI:15378"/>
        <dbReference type="ChEBI" id="CHEBI:37565"/>
        <dbReference type="ChEBI" id="CHEBI:43474"/>
        <dbReference type="ChEBI" id="CHEBI:58189"/>
        <dbReference type="EC" id="3.6.5.3"/>
    </reaction>
    <physiologicalReaction direction="left-to-right" evidence="2">
        <dbReference type="Rhea" id="RHEA:19670"/>
    </physiologicalReaction>
</comment>
<comment type="subunit">
    <text evidence="2">Monomer.</text>
</comment>
<comment type="subcellular location">
    <subcellularLocation>
        <location evidence="2">Cytoplasm</location>
    </subcellularLocation>
</comment>
<comment type="similarity">
    <text evidence="2">Belongs to the TRAFAC class translation factor GTPase superfamily. Classic translation factor GTPase family. EF-Tu/EF-1A subfamily.</text>
</comment>
<keyword id="KW-0963">Cytoplasm</keyword>
<keyword id="KW-0251">Elongation factor</keyword>
<keyword id="KW-0342">GTP-binding</keyword>
<keyword id="KW-0378">Hydrolase</keyword>
<keyword id="KW-0460">Magnesium</keyword>
<keyword id="KW-0479">Metal-binding</keyword>
<keyword id="KW-0547">Nucleotide-binding</keyword>
<keyword id="KW-0648">Protein biosynthesis</keyword>
<keyword id="KW-1185">Reference proteome</keyword>
<dbReference type="EC" id="3.6.5.3" evidence="2"/>
<dbReference type="EMBL" id="AE009948">
    <property type="protein sequence ID" value="AAM99649.1"/>
    <property type="molecule type" value="Genomic_DNA"/>
</dbReference>
<dbReference type="RefSeq" id="NP_687777.1">
    <property type="nucleotide sequence ID" value="NC_004116.1"/>
</dbReference>
<dbReference type="RefSeq" id="WP_001040731.1">
    <property type="nucleotide sequence ID" value="NC_004116.1"/>
</dbReference>
<dbReference type="SMR" id="Q8E0H1"/>
<dbReference type="STRING" id="208435.SAG0762"/>
<dbReference type="KEGG" id="sag:SAG0762"/>
<dbReference type="PATRIC" id="fig|208435.3.peg.769"/>
<dbReference type="HOGENOM" id="CLU_007265_0_0_9"/>
<dbReference type="OrthoDB" id="9804504at2"/>
<dbReference type="Proteomes" id="UP000000821">
    <property type="component" value="Chromosome"/>
</dbReference>
<dbReference type="GO" id="GO:0005829">
    <property type="term" value="C:cytosol"/>
    <property type="evidence" value="ECO:0007669"/>
    <property type="project" value="TreeGrafter"/>
</dbReference>
<dbReference type="GO" id="GO:0005525">
    <property type="term" value="F:GTP binding"/>
    <property type="evidence" value="ECO:0007669"/>
    <property type="project" value="UniProtKB-UniRule"/>
</dbReference>
<dbReference type="GO" id="GO:0003924">
    <property type="term" value="F:GTPase activity"/>
    <property type="evidence" value="ECO:0007669"/>
    <property type="project" value="InterPro"/>
</dbReference>
<dbReference type="GO" id="GO:0003746">
    <property type="term" value="F:translation elongation factor activity"/>
    <property type="evidence" value="ECO:0007669"/>
    <property type="project" value="UniProtKB-UniRule"/>
</dbReference>
<dbReference type="CDD" id="cd01884">
    <property type="entry name" value="EF_Tu"/>
    <property type="match status" value="1"/>
</dbReference>
<dbReference type="CDD" id="cd03697">
    <property type="entry name" value="EFTU_II"/>
    <property type="match status" value="1"/>
</dbReference>
<dbReference type="CDD" id="cd03707">
    <property type="entry name" value="EFTU_III"/>
    <property type="match status" value="1"/>
</dbReference>
<dbReference type="FunFam" id="2.40.30.10:FF:000001">
    <property type="entry name" value="Elongation factor Tu"/>
    <property type="match status" value="1"/>
</dbReference>
<dbReference type="FunFam" id="3.40.50.300:FF:000003">
    <property type="entry name" value="Elongation factor Tu"/>
    <property type="match status" value="1"/>
</dbReference>
<dbReference type="Gene3D" id="3.40.50.300">
    <property type="entry name" value="P-loop containing nucleotide triphosphate hydrolases"/>
    <property type="match status" value="1"/>
</dbReference>
<dbReference type="Gene3D" id="2.40.30.10">
    <property type="entry name" value="Translation factors"/>
    <property type="match status" value="2"/>
</dbReference>
<dbReference type="HAMAP" id="MF_00118_B">
    <property type="entry name" value="EF_Tu_B"/>
    <property type="match status" value="1"/>
</dbReference>
<dbReference type="InterPro" id="IPR041709">
    <property type="entry name" value="EF-Tu_GTP-bd"/>
</dbReference>
<dbReference type="InterPro" id="IPR050055">
    <property type="entry name" value="EF-Tu_GTPase"/>
</dbReference>
<dbReference type="InterPro" id="IPR004161">
    <property type="entry name" value="EFTu-like_2"/>
</dbReference>
<dbReference type="InterPro" id="IPR033720">
    <property type="entry name" value="EFTU_2"/>
</dbReference>
<dbReference type="InterPro" id="IPR031157">
    <property type="entry name" value="G_TR_CS"/>
</dbReference>
<dbReference type="InterPro" id="IPR027417">
    <property type="entry name" value="P-loop_NTPase"/>
</dbReference>
<dbReference type="InterPro" id="IPR005225">
    <property type="entry name" value="Small_GTP-bd"/>
</dbReference>
<dbReference type="InterPro" id="IPR000795">
    <property type="entry name" value="T_Tr_GTP-bd_dom"/>
</dbReference>
<dbReference type="InterPro" id="IPR009000">
    <property type="entry name" value="Transl_B-barrel_sf"/>
</dbReference>
<dbReference type="InterPro" id="IPR009001">
    <property type="entry name" value="Transl_elong_EF1A/Init_IF2_C"/>
</dbReference>
<dbReference type="InterPro" id="IPR004541">
    <property type="entry name" value="Transl_elong_EFTu/EF1A_bac/org"/>
</dbReference>
<dbReference type="InterPro" id="IPR004160">
    <property type="entry name" value="Transl_elong_EFTu/EF1A_C"/>
</dbReference>
<dbReference type="NCBIfam" id="TIGR00485">
    <property type="entry name" value="EF-Tu"/>
    <property type="match status" value="1"/>
</dbReference>
<dbReference type="NCBIfam" id="NF000766">
    <property type="entry name" value="PRK00049.1"/>
    <property type="match status" value="1"/>
</dbReference>
<dbReference type="NCBIfam" id="NF009372">
    <property type="entry name" value="PRK12735.1"/>
    <property type="match status" value="1"/>
</dbReference>
<dbReference type="NCBIfam" id="NF009373">
    <property type="entry name" value="PRK12736.1"/>
    <property type="match status" value="1"/>
</dbReference>
<dbReference type="NCBIfam" id="TIGR00231">
    <property type="entry name" value="small_GTP"/>
    <property type="match status" value="1"/>
</dbReference>
<dbReference type="PANTHER" id="PTHR43721:SF22">
    <property type="entry name" value="ELONGATION FACTOR TU, MITOCHONDRIAL"/>
    <property type="match status" value="1"/>
</dbReference>
<dbReference type="PANTHER" id="PTHR43721">
    <property type="entry name" value="ELONGATION FACTOR TU-RELATED"/>
    <property type="match status" value="1"/>
</dbReference>
<dbReference type="Pfam" id="PF00009">
    <property type="entry name" value="GTP_EFTU"/>
    <property type="match status" value="1"/>
</dbReference>
<dbReference type="Pfam" id="PF03144">
    <property type="entry name" value="GTP_EFTU_D2"/>
    <property type="match status" value="1"/>
</dbReference>
<dbReference type="Pfam" id="PF03143">
    <property type="entry name" value="GTP_EFTU_D3"/>
    <property type="match status" value="1"/>
</dbReference>
<dbReference type="PRINTS" id="PR00315">
    <property type="entry name" value="ELONGATNFCT"/>
</dbReference>
<dbReference type="SUPFAM" id="SSF50465">
    <property type="entry name" value="EF-Tu/eEF-1alpha/eIF2-gamma C-terminal domain"/>
    <property type="match status" value="1"/>
</dbReference>
<dbReference type="SUPFAM" id="SSF52540">
    <property type="entry name" value="P-loop containing nucleoside triphosphate hydrolases"/>
    <property type="match status" value="1"/>
</dbReference>
<dbReference type="SUPFAM" id="SSF50447">
    <property type="entry name" value="Translation proteins"/>
    <property type="match status" value="1"/>
</dbReference>
<dbReference type="PROSITE" id="PS00301">
    <property type="entry name" value="G_TR_1"/>
    <property type="match status" value="1"/>
</dbReference>
<dbReference type="PROSITE" id="PS51722">
    <property type="entry name" value="G_TR_2"/>
    <property type="match status" value="1"/>
</dbReference>
<proteinExistence type="inferred from homology"/>
<sequence>MAKEKYDRSKPHVNIGTIGHVDHGKTTLTAAITTVLARRLPTSVNQPKDYASIDAAPEERERGITINTAHVEYETEKRHYAHIDAPGHADYVKNMITGAAQMDGAILVVASTDGPMPQTREHILLSRQVGVKHLIVFMNKVDLVDDEELLELVEMEIRDLLSEYDFPGDDLPVIQGSALKALEGDEKYEDIIMELMSTVDEYIPEPERDTDKPLLLPVEDVFSITGRGTVASGRIDRGTVRVNDEVEIVGIKEDIQKAVVTGVEMFRKQLDEGLAGDNVGVLLRGVQRDEIERGQVLAKPGSINPHTRFKGEVYILSKEEGGRHTPFFNNYRPQFYFRTTDVTGSIELPAGTEMVMPGDNVTIEVELIHPIAVEQGTTFSIREGGRTVGSGIVSEIEA</sequence>
<name>EFTU_STRA5</name>
<gene>
    <name evidence="2" type="primary">tuf</name>
    <name type="ordered locus">SAG0762</name>
</gene>
<feature type="chain" id="PRO_1000015757" description="Elongation factor Tu">
    <location>
        <begin position="1"/>
        <end position="398"/>
    </location>
</feature>
<feature type="domain" description="tr-type G">
    <location>
        <begin position="10"/>
        <end position="207"/>
    </location>
</feature>
<feature type="region of interest" description="G1" evidence="1">
    <location>
        <begin position="19"/>
        <end position="26"/>
    </location>
</feature>
<feature type="region of interest" description="G2" evidence="1">
    <location>
        <begin position="63"/>
        <end position="67"/>
    </location>
</feature>
<feature type="region of interest" description="G3" evidence="1">
    <location>
        <begin position="84"/>
        <end position="87"/>
    </location>
</feature>
<feature type="region of interest" description="G4" evidence="1">
    <location>
        <begin position="139"/>
        <end position="142"/>
    </location>
</feature>
<feature type="region of interest" description="G5" evidence="1">
    <location>
        <begin position="177"/>
        <end position="179"/>
    </location>
</feature>
<feature type="binding site" evidence="2">
    <location>
        <begin position="19"/>
        <end position="26"/>
    </location>
    <ligand>
        <name>GTP</name>
        <dbReference type="ChEBI" id="CHEBI:37565"/>
    </ligand>
</feature>
<feature type="binding site" evidence="2">
    <location>
        <position position="26"/>
    </location>
    <ligand>
        <name>Mg(2+)</name>
        <dbReference type="ChEBI" id="CHEBI:18420"/>
    </ligand>
</feature>
<feature type="binding site" evidence="2">
    <location>
        <begin position="84"/>
        <end position="88"/>
    </location>
    <ligand>
        <name>GTP</name>
        <dbReference type="ChEBI" id="CHEBI:37565"/>
    </ligand>
</feature>
<feature type="binding site" evidence="2">
    <location>
        <begin position="139"/>
        <end position="142"/>
    </location>
    <ligand>
        <name>GTP</name>
        <dbReference type="ChEBI" id="CHEBI:37565"/>
    </ligand>
</feature>
<accession>Q8E0H1</accession>
<evidence type="ECO:0000250" key="1"/>
<evidence type="ECO:0000255" key="2">
    <source>
        <dbReference type="HAMAP-Rule" id="MF_00118"/>
    </source>
</evidence>
<protein>
    <recommendedName>
        <fullName evidence="2">Elongation factor Tu</fullName>
        <shortName evidence="2">EF-Tu</shortName>
        <ecNumber evidence="2">3.6.5.3</ecNumber>
    </recommendedName>
</protein>
<reference key="1">
    <citation type="journal article" date="2002" name="Proc. Natl. Acad. Sci. U.S.A.">
        <title>Complete genome sequence and comparative genomic analysis of an emerging human pathogen, serotype V Streptococcus agalactiae.</title>
        <authorList>
            <person name="Tettelin H."/>
            <person name="Masignani V."/>
            <person name="Cieslewicz M.J."/>
            <person name="Eisen J.A."/>
            <person name="Peterson S.N."/>
            <person name="Wessels M.R."/>
            <person name="Paulsen I.T."/>
            <person name="Nelson K.E."/>
            <person name="Margarit I."/>
            <person name="Read T.D."/>
            <person name="Madoff L.C."/>
            <person name="Wolf A.M."/>
            <person name="Beanan M.J."/>
            <person name="Brinkac L.M."/>
            <person name="Daugherty S.C."/>
            <person name="DeBoy R.T."/>
            <person name="Durkin A.S."/>
            <person name="Kolonay J.F."/>
            <person name="Madupu R."/>
            <person name="Lewis M.R."/>
            <person name="Radune D."/>
            <person name="Fedorova N.B."/>
            <person name="Scanlan D."/>
            <person name="Khouri H.M."/>
            <person name="Mulligan S."/>
            <person name="Carty H.A."/>
            <person name="Cline R.T."/>
            <person name="Van Aken S.E."/>
            <person name="Gill J."/>
            <person name="Scarselli M."/>
            <person name="Mora M."/>
            <person name="Iacobini E.T."/>
            <person name="Brettoni C."/>
            <person name="Galli G."/>
            <person name="Mariani M."/>
            <person name="Vegni F."/>
            <person name="Maione D."/>
            <person name="Rinaudo D."/>
            <person name="Rappuoli R."/>
            <person name="Telford J.L."/>
            <person name="Kasper D.L."/>
            <person name="Grandi G."/>
            <person name="Fraser C.M."/>
        </authorList>
    </citation>
    <scope>NUCLEOTIDE SEQUENCE [LARGE SCALE GENOMIC DNA]</scope>
    <source>
        <strain>ATCC BAA-611 / 2603 V/R</strain>
    </source>
</reference>
<organism>
    <name type="scientific">Streptococcus agalactiae serotype V (strain ATCC BAA-611 / 2603 V/R)</name>
    <dbReference type="NCBI Taxonomy" id="208435"/>
    <lineage>
        <taxon>Bacteria</taxon>
        <taxon>Bacillati</taxon>
        <taxon>Bacillota</taxon>
        <taxon>Bacilli</taxon>
        <taxon>Lactobacillales</taxon>
        <taxon>Streptococcaceae</taxon>
        <taxon>Streptococcus</taxon>
    </lineage>
</organism>